<name>BH123_ARATH</name>
<comment type="subunit">
    <text evidence="3">Homodimer.</text>
</comment>
<comment type="interaction">
    <interactant intactId="EBI-15194527">
        <id>Q8GXT3</id>
    </interactant>
    <interactant intactId="EBI-4442198">
        <id>Q93Y00</id>
        <label>BHLH7</label>
    </interactant>
    <organismsDiffer>false</organismsDiffer>
    <experiments>3</experiments>
</comment>
<comment type="subcellular location">
    <subcellularLocation>
        <location evidence="1">Nucleus</location>
    </subcellularLocation>
</comment>
<comment type="sequence caution" evidence="3">
    <conflict type="erroneous gene model prediction">
        <sequence resource="EMBL-CDS" id="BAB02240"/>
    </conflict>
</comment>
<proteinExistence type="evidence at protein level"/>
<accession>Q8GXT3</accession>
<accession>Q9LHQ8</accession>
<keyword id="KW-0238">DNA-binding</keyword>
<keyword id="KW-0539">Nucleus</keyword>
<keyword id="KW-1185">Reference proteome</keyword>
<keyword id="KW-0804">Transcription</keyword>
<keyword id="KW-0805">Transcription regulation</keyword>
<evidence type="ECO:0000255" key="1">
    <source>
        <dbReference type="PROSITE-ProRule" id="PRU00981"/>
    </source>
</evidence>
<evidence type="ECO:0000256" key="2">
    <source>
        <dbReference type="SAM" id="MobiDB-lite"/>
    </source>
</evidence>
<evidence type="ECO:0000305" key="3"/>
<gene>
    <name type="primary">BHLH123</name>
    <name type="synonym">EN63</name>
    <name type="ordered locus">At3g20640</name>
    <name type="ORF">F3H11.2</name>
</gene>
<feature type="chain" id="PRO_0000358808" description="Transcription factor bHLH123">
    <location>
        <begin position="1"/>
        <end position="454"/>
    </location>
</feature>
<feature type="domain" description="bHLH" evidence="1">
    <location>
        <begin position="334"/>
        <end position="383"/>
    </location>
</feature>
<feature type="region of interest" description="Disordered" evidence="2">
    <location>
        <begin position="101"/>
        <end position="127"/>
    </location>
</feature>
<feature type="region of interest" description="Disordered" evidence="2">
    <location>
        <begin position="185"/>
        <end position="228"/>
    </location>
</feature>
<feature type="region of interest" description="Disordered" evidence="2">
    <location>
        <begin position="270"/>
        <end position="348"/>
    </location>
</feature>
<feature type="region of interest" description="Disordered" evidence="2">
    <location>
        <begin position="398"/>
        <end position="417"/>
    </location>
</feature>
<feature type="compositionally biased region" description="Low complexity" evidence="2">
    <location>
        <begin position="101"/>
        <end position="113"/>
    </location>
</feature>
<feature type="compositionally biased region" description="Polar residues" evidence="2">
    <location>
        <begin position="185"/>
        <end position="195"/>
    </location>
</feature>
<feature type="compositionally biased region" description="Polar residues" evidence="2">
    <location>
        <begin position="207"/>
        <end position="228"/>
    </location>
</feature>
<feature type="compositionally biased region" description="Basic and acidic residues" evidence="2">
    <location>
        <begin position="303"/>
        <end position="324"/>
    </location>
</feature>
<dbReference type="EMBL" id="AP002034">
    <property type="protein sequence ID" value="BAB02240.1"/>
    <property type="status" value="ALT_SEQ"/>
    <property type="molecule type" value="Genomic_DNA"/>
</dbReference>
<dbReference type="EMBL" id="CP002686">
    <property type="protein sequence ID" value="AEE76406.1"/>
    <property type="molecule type" value="Genomic_DNA"/>
</dbReference>
<dbReference type="EMBL" id="AK118054">
    <property type="protein sequence ID" value="BAC42685.1"/>
    <property type="molecule type" value="mRNA"/>
</dbReference>
<dbReference type="EMBL" id="BT008580">
    <property type="protein sequence ID" value="AAP40407.1"/>
    <property type="molecule type" value="mRNA"/>
</dbReference>
<dbReference type="RefSeq" id="NP_188700.1">
    <property type="nucleotide sequence ID" value="NM_112955.3"/>
</dbReference>
<dbReference type="SMR" id="Q8GXT3"/>
<dbReference type="BioGRID" id="6943">
    <property type="interactions" value="8"/>
</dbReference>
<dbReference type="FunCoup" id="Q8GXT3">
    <property type="interactions" value="69"/>
</dbReference>
<dbReference type="IntAct" id="Q8GXT3">
    <property type="interactions" value="9"/>
</dbReference>
<dbReference type="STRING" id="3702.Q8GXT3"/>
<dbReference type="iPTMnet" id="Q8GXT3"/>
<dbReference type="PaxDb" id="3702-AT3G20640.1"/>
<dbReference type="EnsemblPlants" id="AT3G20640.1">
    <property type="protein sequence ID" value="AT3G20640.1"/>
    <property type="gene ID" value="AT3G20640"/>
</dbReference>
<dbReference type="GeneID" id="821611"/>
<dbReference type="Gramene" id="AT3G20640.1">
    <property type="protein sequence ID" value="AT3G20640.1"/>
    <property type="gene ID" value="AT3G20640"/>
</dbReference>
<dbReference type="KEGG" id="ath:AT3G20640"/>
<dbReference type="Araport" id="AT3G20640"/>
<dbReference type="TAIR" id="AT3G20640"/>
<dbReference type="eggNOG" id="ENOG502QRNH">
    <property type="taxonomic scope" value="Eukaryota"/>
</dbReference>
<dbReference type="HOGENOM" id="CLU_041735_1_1_1"/>
<dbReference type="InParanoid" id="Q8GXT3"/>
<dbReference type="PhylomeDB" id="Q8GXT3"/>
<dbReference type="PRO" id="PR:Q8GXT3"/>
<dbReference type="Proteomes" id="UP000006548">
    <property type="component" value="Chromosome 3"/>
</dbReference>
<dbReference type="ExpressionAtlas" id="Q8GXT3">
    <property type="expression patterns" value="baseline and differential"/>
</dbReference>
<dbReference type="GO" id="GO:0005634">
    <property type="term" value="C:nucleus"/>
    <property type="evidence" value="ECO:0007669"/>
    <property type="project" value="UniProtKB-SubCell"/>
</dbReference>
<dbReference type="GO" id="GO:0003677">
    <property type="term" value="F:DNA binding"/>
    <property type="evidence" value="ECO:0007669"/>
    <property type="project" value="UniProtKB-KW"/>
</dbReference>
<dbReference type="GO" id="GO:0003700">
    <property type="term" value="F:DNA-binding transcription factor activity"/>
    <property type="evidence" value="ECO:0000250"/>
    <property type="project" value="TAIR"/>
</dbReference>
<dbReference type="GO" id="GO:0046983">
    <property type="term" value="F:protein dimerization activity"/>
    <property type="evidence" value="ECO:0007669"/>
    <property type="project" value="InterPro"/>
</dbReference>
<dbReference type="CDD" id="cd11393">
    <property type="entry name" value="bHLH_AtbHLH_like"/>
    <property type="match status" value="1"/>
</dbReference>
<dbReference type="FunFam" id="4.10.280.10:FF:000032">
    <property type="entry name" value="Transcription factor bHLH123 family"/>
    <property type="match status" value="1"/>
</dbReference>
<dbReference type="Gene3D" id="4.10.280.10">
    <property type="entry name" value="Helix-loop-helix DNA-binding domain"/>
    <property type="match status" value="1"/>
</dbReference>
<dbReference type="InterPro" id="IPR045239">
    <property type="entry name" value="bHLH95_bHLH"/>
</dbReference>
<dbReference type="InterPro" id="IPR011598">
    <property type="entry name" value="bHLH_dom"/>
</dbReference>
<dbReference type="InterPro" id="IPR036638">
    <property type="entry name" value="HLH_DNA-bd_sf"/>
</dbReference>
<dbReference type="InterPro" id="IPR045843">
    <property type="entry name" value="IND-like"/>
</dbReference>
<dbReference type="PANTHER" id="PTHR16223:SF46">
    <property type="entry name" value="TRANSCRIPTION FACTOR BHLH123"/>
    <property type="match status" value="1"/>
</dbReference>
<dbReference type="PANTHER" id="PTHR16223">
    <property type="entry name" value="TRANSCRIPTION FACTOR BHLH83-RELATED"/>
    <property type="match status" value="1"/>
</dbReference>
<dbReference type="SUPFAM" id="SSF47459">
    <property type="entry name" value="HLH, helix-loop-helix DNA-binding domain"/>
    <property type="match status" value="1"/>
</dbReference>
<dbReference type="PROSITE" id="PS50888">
    <property type="entry name" value="BHLH"/>
    <property type="match status" value="1"/>
</dbReference>
<protein>
    <recommendedName>
        <fullName>Transcription factor bHLH123</fullName>
    </recommendedName>
    <alternativeName>
        <fullName>Basic helix-loop-helix protein 123</fullName>
        <shortName>AtbHLH123</shortName>
        <shortName>bHLH 123</shortName>
    </alternativeName>
    <alternativeName>
        <fullName>Transcription factor EN 63</fullName>
    </alternativeName>
    <alternativeName>
        <fullName>bHLH transcription factor bHLH123</fullName>
    </alternativeName>
</protein>
<reference key="1">
    <citation type="journal article" date="2000" name="DNA Res.">
        <title>Structural analysis of Arabidopsis thaliana chromosome 3. II. Sequence features of the 4,251,695 bp regions covered by 90 P1, TAC and BAC clones.</title>
        <authorList>
            <person name="Kaneko T."/>
            <person name="Katoh T."/>
            <person name="Sato S."/>
            <person name="Nakamura Y."/>
            <person name="Asamizu E."/>
            <person name="Tabata S."/>
        </authorList>
    </citation>
    <scope>NUCLEOTIDE SEQUENCE [LARGE SCALE GENOMIC DNA]</scope>
    <source>
        <strain>cv. Columbia</strain>
    </source>
</reference>
<reference key="2">
    <citation type="journal article" date="2017" name="Plant J.">
        <title>Araport11: a complete reannotation of the Arabidopsis thaliana reference genome.</title>
        <authorList>
            <person name="Cheng C.Y."/>
            <person name="Krishnakumar V."/>
            <person name="Chan A.P."/>
            <person name="Thibaud-Nissen F."/>
            <person name="Schobel S."/>
            <person name="Town C.D."/>
        </authorList>
    </citation>
    <scope>GENOME REANNOTATION</scope>
    <source>
        <strain>cv. Columbia</strain>
    </source>
</reference>
<reference key="3">
    <citation type="journal article" date="2002" name="Science">
        <title>Functional annotation of a full-length Arabidopsis cDNA collection.</title>
        <authorList>
            <person name="Seki M."/>
            <person name="Narusaka M."/>
            <person name="Kamiya A."/>
            <person name="Ishida J."/>
            <person name="Satou M."/>
            <person name="Sakurai T."/>
            <person name="Nakajima M."/>
            <person name="Enju A."/>
            <person name="Akiyama K."/>
            <person name="Oono Y."/>
            <person name="Muramatsu M."/>
            <person name="Hayashizaki Y."/>
            <person name="Kawai J."/>
            <person name="Carninci P."/>
            <person name="Itoh M."/>
            <person name="Ishii Y."/>
            <person name="Arakawa T."/>
            <person name="Shibata K."/>
            <person name="Shinagawa A."/>
            <person name="Shinozaki K."/>
        </authorList>
    </citation>
    <scope>NUCLEOTIDE SEQUENCE [LARGE SCALE MRNA]</scope>
    <source>
        <strain>cv. Columbia</strain>
    </source>
</reference>
<reference key="4">
    <citation type="journal article" date="2003" name="Science">
        <title>Empirical analysis of transcriptional activity in the Arabidopsis genome.</title>
        <authorList>
            <person name="Yamada K."/>
            <person name="Lim J."/>
            <person name="Dale J.M."/>
            <person name="Chen H."/>
            <person name="Shinn P."/>
            <person name="Palm C.J."/>
            <person name="Southwick A.M."/>
            <person name="Wu H.C."/>
            <person name="Kim C.J."/>
            <person name="Nguyen M."/>
            <person name="Pham P.K."/>
            <person name="Cheuk R.F."/>
            <person name="Karlin-Newmann G."/>
            <person name="Liu S.X."/>
            <person name="Lam B."/>
            <person name="Sakano H."/>
            <person name="Wu T."/>
            <person name="Yu G."/>
            <person name="Miranda M."/>
            <person name="Quach H.L."/>
            <person name="Tripp M."/>
            <person name="Chang C.H."/>
            <person name="Lee J.M."/>
            <person name="Toriumi M.J."/>
            <person name="Chan M.M."/>
            <person name="Tang C.C."/>
            <person name="Onodera C.S."/>
            <person name="Deng J.M."/>
            <person name="Akiyama K."/>
            <person name="Ansari Y."/>
            <person name="Arakawa T."/>
            <person name="Banh J."/>
            <person name="Banno F."/>
            <person name="Bowser L."/>
            <person name="Brooks S.Y."/>
            <person name="Carninci P."/>
            <person name="Chao Q."/>
            <person name="Choy N."/>
            <person name="Enju A."/>
            <person name="Goldsmith A.D."/>
            <person name="Gurjal M."/>
            <person name="Hansen N.F."/>
            <person name="Hayashizaki Y."/>
            <person name="Johnson-Hopson C."/>
            <person name="Hsuan V.W."/>
            <person name="Iida K."/>
            <person name="Karnes M."/>
            <person name="Khan S."/>
            <person name="Koesema E."/>
            <person name="Ishida J."/>
            <person name="Jiang P.X."/>
            <person name="Jones T."/>
            <person name="Kawai J."/>
            <person name="Kamiya A."/>
            <person name="Meyers C."/>
            <person name="Nakajima M."/>
            <person name="Narusaka M."/>
            <person name="Seki M."/>
            <person name="Sakurai T."/>
            <person name="Satou M."/>
            <person name="Tamse R."/>
            <person name="Vaysberg M."/>
            <person name="Wallender E.K."/>
            <person name="Wong C."/>
            <person name="Yamamura Y."/>
            <person name="Yuan S."/>
            <person name="Shinozaki K."/>
            <person name="Davis R.W."/>
            <person name="Theologis A."/>
            <person name="Ecker J.R."/>
        </authorList>
    </citation>
    <scope>NUCLEOTIDE SEQUENCE [LARGE SCALE MRNA]</scope>
    <source>
        <strain>cv. Columbia</strain>
    </source>
</reference>
<reference key="5">
    <citation type="journal article" date="2003" name="Mol. Biol. Evol.">
        <title>The basic helix-loop-helix transcription factor family in plants: a genome-wide study of protein structure and functional diversity.</title>
        <authorList>
            <person name="Heim M.A."/>
            <person name="Jakoby M."/>
            <person name="Werber M."/>
            <person name="Martin C."/>
            <person name="Weisshaar B."/>
            <person name="Bailey P.C."/>
        </authorList>
    </citation>
    <scope>GENE FAMILY</scope>
    <scope>NOMENCLATURE</scope>
</reference>
<reference key="6">
    <citation type="journal article" date="2003" name="Plant Cell">
        <title>The Arabidopsis basic/helix-loop-helix transcription factor family.</title>
        <authorList>
            <person name="Toledo-Ortiz G."/>
            <person name="Huq E."/>
            <person name="Quail P.H."/>
        </authorList>
    </citation>
    <scope>GENE FAMILY</scope>
</reference>
<reference key="7">
    <citation type="journal article" date="2003" name="Plant Cell">
        <title>Update on the basic helix-loop-helix transcription factor gene family in Arabidopsis thaliana.</title>
        <authorList>
            <person name="Bailey P.C."/>
            <person name="Martin C."/>
            <person name="Toledo-Ortiz G."/>
            <person name="Quail P.H."/>
            <person name="Huq E."/>
            <person name="Heim M.A."/>
            <person name="Jakoby M."/>
            <person name="Werber M."/>
            <person name="Weisshaar B."/>
        </authorList>
    </citation>
    <scope>GENE FAMILY</scope>
    <scope>NOMENCLATURE</scope>
</reference>
<sequence>MGDHHDFINSGSWWKVSSSSSPSSSSSMRASSIESGGSAVFHDKLHHHSLATDHHLQMIGLGLSSQSPVDQWNQSLLRGDSKAETSFGVMLQENLNLDATSNANANTTSSTSSYQLQESDSSHHHQALWRDPQSDFKPQILTSGGNRGFFLDHQFSPHGSSSTDSSTVTCQGFAVDNSSNAMYAATTTTPNSSSGMFHHQQAGGFGSSDQQPSRNHQQSSLGYSQFGSSTGNYDQMASALPSTWFLRSSPPPKPHSPLRFSNNATFWNPAAAGNAGAPPPHDASSNFFPALQPPQIHPQSFDEQPKNISEIRDSSSNEVKRGGNDHQPAAKRAKSEAASPSPAFKRKEKMGDRIAALQQLVSPFGKTDAASVLSEAIEYIKFLHQQVSALSNPYMKSGASLQHQQSDHSTELEVSEEPDLRSRGLCLVPVSSTFPVTHDTTVDFWTPTFGGTFR</sequence>
<organism>
    <name type="scientific">Arabidopsis thaliana</name>
    <name type="common">Mouse-ear cress</name>
    <dbReference type="NCBI Taxonomy" id="3702"/>
    <lineage>
        <taxon>Eukaryota</taxon>
        <taxon>Viridiplantae</taxon>
        <taxon>Streptophyta</taxon>
        <taxon>Embryophyta</taxon>
        <taxon>Tracheophyta</taxon>
        <taxon>Spermatophyta</taxon>
        <taxon>Magnoliopsida</taxon>
        <taxon>eudicotyledons</taxon>
        <taxon>Gunneridae</taxon>
        <taxon>Pentapetalae</taxon>
        <taxon>rosids</taxon>
        <taxon>malvids</taxon>
        <taxon>Brassicales</taxon>
        <taxon>Brassicaceae</taxon>
        <taxon>Camelineae</taxon>
        <taxon>Arabidopsis</taxon>
    </lineage>
</organism>